<feature type="chain" id="PRO_1000143241" description="Small ribosomal subunit protein uS17">
    <location>
        <begin position="1"/>
        <end position="84"/>
    </location>
</feature>
<dbReference type="EMBL" id="CP001056">
    <property type="protein sequence ID" value="ACD22620.1"/>
    <property type="molecule type" value="Genomic_DNA"/>
</dbReference>
<dbReference type="SMR" id="B2TII4"/>
<dbReference type="KEGG" id="cbk:CLL_A0247"/>
<dbReference type="PATRIC" id="fig|935198.13.peg.222"/>
<dbReference type="HOGENOM" id="CLU_073626_1_0_9"/>
<dbReference type="Proteomes" id="UP000001195">
    <property type="component" value="Chromosome"/>
</dbReference>
<dbReference type="GO" id="GO:0022627">
    <property type="term" value="C:cytosolic small ribosomal subunit"/>
    <property type="evidence" value="ECO:0007669"/>
    <property type="project" value="TreeGrafter"/>
</dbReference>
<dbReference type="GO" id="GO:0019843">
    <property type="term" value="F:rRNA binding"/>
    <property type="evidence" value="ECO:0007669"/>
    <property type="project" value="UniProtKB-UniRule"/>
</dbReference>
<dbReference type="GO" id="GO:0003735">
    <property type="term" value="F:structural constituent of ribosome"/>
    <property type="evidence" value="ECO:0007669"/>
    <property type="project" value="InterPro"/>
</dbReference>
<dbReference type="GO" id="GO:0006412">
    <property type="term" value="P:translation"/>
    <property type="evidence" value="ECO:0007669"/>
    <property type="project" value="UniProtKB-UniRule"/>
</dbReference>
<dbReference type="CDD" id="cd00364">
    <property type="entry name" value="Ribosomal_uS17"/>
    <property type="match status" value="1"/>
</dbReference>
<dbReference type="FunFam" id="2.40.50.140:FF:000123">
    <property type="entry name" value="30S ribosomal protein S17"/>
    <property type="match status" value="1"/>
</dbReference>
<dbReference type="Gene3D" id="2.40.50.140">
    <property type="entry name" value="Nucleic acid-binding proteins"/>
    <property type="match status" value="1"/>
</dbReference>
<dbReference type="HAMAP" id="MF_01345_B">
    <property type="entry name" value="Ribosomal_uS17_B"/>
    <property type="match status" value="1"/>
</dbReference>
<dbReference type="InterPro" id="IPR012340">
    <property type="entry name" value="NA-bd_OB-fold"/>
</dbReference>
<dbReference type="InterPro" id="IPR000266">
    <property type="entry name" value="Ribosomal_uS17"/>
</dbReference>
<dbReference type="InterPro" id="IPR019984">
    <property type="entry name" value="Ribosomal_uS17_bact/chlr"/>
</dbReference>
<dbReference type="NCBIfam" id="NF004123">
    <property type="entry name" value="PRK05610.1"/>
    <property type="match status" value="1"/>
</dbReference>
<dbReference type="NCBIfam" id="TIGR03635">
    <property type="entry name" value="uS17_bact"/>
    <property type="match status" value="1"/>
</dbReference>
<dbReference type="PANTHER" id="PTHR10744">
    <property type="entry name" value="40S RIBOSOMAL PROTEIN S11 FAMILY MEMBER"/>
    <property type="match status" value="1"/>
</dbReference>
<dbReference type="PANTHER" id="PTHR10744:SF1">
    <property type="entry name" value="SMALL RIBOSOMAL SUBUNIT PROTEIN US17M"/>
    <property type="match status" value="1"/>
</dbReference>
<dbReference type="Pfam" id="PF00366">
    <property type="entry name" value="Ribosomal_S17"/>
    <property type="match status" value="1"/>
</dbReference>
<dbReference type="PRINTS" id="PR00973">
    <property type="entry name" value="RIBOSOMALS17"/>
</dbReference>
<dbReference type="SUPFAM" id="SSF50249">
    <property type="entry name" value="Nucleic acid-binding proteins"/>
    <property type="match status" value="1"/>
</dbReference>
<reference key="1">
    <citation type="submission" date="2008-04" db="EMBL/GenBank/DDBJ databases">
        <title>Complete sequence of Clostridium botulinum strain Eklund.</title>
        <authorList>
            <person name="Brinkac L.M."/>
            <person name="Brown J.L."/>
            <person name="Bruce D."/>
            <person name="Detter C."/>
            <person name="Munk C."/>
            <person name="Smith L.A."/>
            <person name="Smith T.J."/>
            <person name="Sutton G."/>
            <person name="Brettin T.S."/>
        </authorList>
    </citation>
    <scope>NUCLEOTIDE SEQUENCE [LARGE SCALE GENOMIC DNA]</scope>
    <source>
        <strain>Eklund 17B / Type B</strain>
    </source>
</reference>
<comment type="function">
    <text evidence="1">One of the primary rRNA binding proteins, it binds specifically to the 5'-end of 16S ribosomal RNA.</text>
</comment>
<comment type="subunit">
    <text evidence="1">Part of the 30S ribosomal subunit.</text>
</comment>
<comment type="similarity">
    <text evidence="1">Belongs to the universal ribosomal protein uS17 family.</text>
</comment>
<organism>
    <name type="scientific">Clostridium botulinum (strain Eklund 17B / Type B)</name>
    <dbReference type="NCBI Taxonomy" id="935198"/>
    <lineage>
        <taxon>Bacteria</taxon>
        <taxon>Bacillati</taxon>
        <taxon>Bacillota</taxon>
        <taxon>Clostridia</taxon>
        <taxon>Eubacteriales</taxon>
        <taxon>Clostridiaceae</taxon>
        <taxon>Clostridium</taxon>
    </lineage>
</organism>
<proteinExistence type="inferred from homology"/>
<accession>B2TII4</accession>
<protein>
    <recommendedName>
        <fullName evidence="1">Small ribosomal subunit protein uS17</fullName>
    </recommendedName>
    <alternativeName>
        <fullName evidence="2">30S ribosomal protein S17</fullName>
    </alternativeName>
</protein>
<evidence type="ECO:0000255" key="1">
    <source>
        <dbReference type="HAMAP-Rule" id="MF_01345"/>
    </source>
</evidence>
<evidence type="ECO:0000305" key="2"/>
<sequence length="84" mass="9959">MERTLRKKRNGRVVSDKMDKTVVVAVETKVRHPLYGKTINKTTKFKVHDEKNEAKINDRVLIMETRPLSKDKRWRLVEIVEKAK</sequence>
<keyword id="KW-0687">Ribonucleoprotein</keyword>
<keyword id="KW-0689">Ribosomal protein</keyword>
<keyword id="KW-0694">RNA-binding</keyword>
<keyword id="KW-0699">rRNA-binding</keyword>
<name>RS17_CLOBB</name>
<gene>
    <name evidence="1" type="primary">rpsQ</name>
    <name type="ordered locus">CLL_A0247</name>
</gene>